<accession>Q6L8G8</accession>
<accession>B2RNM3</accession>
<accession>Q701N5</accession>
<name>KRA57_HUMAN</name>
<feature type="chain" id="PRO_0000184105" description="Keratin-associated protein 5-7">
    <location>
        <begin position="1"/>
        <end position="165"/>
    </location>
</feature>
<feature type="repeat" description="1">
    <location>
        <begin position="35"/>
        <end position="38"/>
    </location>
</feature>
<feature type="repeat" description="2">
    <location>
        <begin position="41"/>
        <end position="44"/>
    </location>
</feature>
<feature type="repeat" description="3">
    <location>
        <begin position="47"/>
        <end position="50"/>
    </location>
</feature>
<feature type="repeat" description="4">
    <location>
        <begin position="116"/>
        <end position="119"/>
    </location>
</feature>
<feature type="repeat" description="5">
    <location>
        <begin position="126"/>
        <end position="129"/>
    </location>
</feature>
<feature type="repeat" description="6">
    <location>
        <begin position="145"/>
        <end position="148"/>
    </location>
</feature>
<feature type="repeat" description="7">
    <location>
        <begin position="155"/>
        <end position="158"/>
    </location>
</feature>
<feature type="region of interest" description="7 X 4 AA repeats of C-C-X-P">
    <location>
        <begin position="35"/>
        <end position="158"/>
    </location>
</feature>
<organism>
    <name type="scientific">Homo sapiens</name>
    <name type="common">Human</name>
    <dbReference type="NCBI Taxonomy" id="9606"/>
    <lineage>
        <taxon>Eukaryota</taxon>
        <taxon>Metazoa</taxon>
        <taxon>Chordata</taxon>
        <taxon>Craniata</taxon>
        <taxon>Vertebrata</taxon>
        <taxon>Euteleostomi</taxon>
        <taxon>Mammalia</taxon>
        <taxon>Eutheria</taxon>
        <taxon>Euarchontoglires</taxon>
        <taxon>Primates</taxon>
        <taxon>Haplorrhini</taxon>
        <taxon>Catarrhini</taxon>
        <taxon>Hominidae</taxon>
        <taxon>Homo</taxon>
    </lineage>
</organism>
<sequence length="165" mass="15150">MGCCGCSEGCGSGCGGCGSGCGGCGSGCGGCGSSCCVPVCCCKPVCCCVPACSCSSCGSCGGSKGGCGSCGGSKGGCGSCGGSKGGCGSCGCSQCSCYKPCCCSSGCGSSCCQSSCCKPCCCQSSCCKPCCCSSGCGSSCCQSSCCNPCCSQSSCCVPVCCQCKI</sequence>
<protein>
    <recommendedName>
        <fullName>Keratin-associated protein 5-7</fullName>
    </recommendedName>
    <alternativeName>
        <fullName>Keratin-associated protein 5-3</fullName>
    </alternativeName>
    <alternativeName>
        <fullName>Keratin-associated protein 5.3</fullName>
    </alternativeName>
    <alternativeName>
        <fullName>Keratin-associated protein 5.7</fullName>
    </alternativeName>
    <alternativeName>
        <fullName>Ultrahigh sulfur keratin-associated protein 5.7</fullName>
    </alternativeName>
</protein>
<gene>
    <name type="primary">KRTAP5-7</name>
    <name type="synonym">KAP5-7</name>
    <name type="synonym">KAP5.3</name>
    <name type="synonym">KRTAP5.3</name>
    <name type="synonym">KRTAP5.7</name>
</gene>
<keyword id="KW-0416">Keratin</keyword>
<keyword id="KW-1267">Proteomics identification</keyword>
<keyword id="KW-1185">Reference proteome</keyword>
<keyword id="KW-0677">Repeat</keyword>
<comment type="function">
    <text>In the hair cortex, hair keratin intermediate filaments are embedded in an interfilamentous matrix, consisting of hair keratin-associated protein (KRTAP), which are essential for the formation of a rigid and resistant hair shaft through their extensive disulfide bond cross-linking with abundant cysteine residues of hair keratins. The matrix proteins include the high-sulfur and high-glycine-tyrosine keratins.</text>
</comment>
<comment type="subunit">
    <text>Interacts with hair keratins.</text>
</comment>
<comment type="interaction">
    <interactant intactId="EBI-11987425">
        <id>Q6L8G8</id>
    </interactant>
    <interactant intactId="EBI-10221726">
        <id>P82987</id>
        <label>ADAMTSL3</label>
    </interactant>
    <organismsDiffer>false</organismsDiffer>
    <experiments>3</experiments>
</comment>
<comment type="interaction">
    <interactant intactId="EBI-11987425">
        <id>Q6L8G8</id>
    </interactant>
    <interactant intactId="EBI-10173507">
        <id>Q6UY14-3</id>
        <label>ADAMTSL4</label>
    </interactant>
    <organismsDiffer>false</organismsDiffer>
    <experiments>3</experiments>
</comment>
<comment type="interaction">
    <interactant intactId="EBI-11987425">
        <id>Q6L8G8</id>
    </interactant>
    <interactant intactId="EBI-11530605">
        <id>Q9H257-2</id>
        <label>CARD9</label>
    </interactant>
    <organismsDiffer>false</organismsDiffer>
    <experiments>3</experiments>
</comment>
<comment type="interaction">
    <interactant intactId="EBI-11987425">
        <id>Q6L8G8</id>
    </interactant>
    <interactant intactId="EBI-10254587">
        <id>Q6UXG3</id>
        <label>CD300LG</label>
    </interactant>
    <organismsDiffer>false</organismsDiffer>
    <experiments>3</experiments>
</comment>
<comment type="interaction">
    <interactant intactId="EBI-11987425">
        <id>Q6L8G8</id>
    </interactant>
    <interactant intactId="EBI-747133">
        <id>P27658</id>
        <label>COL8A1</label>
    </interactant>
    <organismsDiffer>false</organismsDiffer>
    <experiments>3</experiments>
</comment>
<comment type="interaction">
    <interactant intactId="EBI-11987425">
        <id>Q6L8G8</id>
    </interactant>
    <interactant intactId="EBI-713677">
        <id>Q9UGL9</id>
        <label>CRCT1</label>
    </interactant>
    <organismsDiffer>false</organismsDiffer>
    <experiments>3</experiments>
</comment>
<comment type="interaction">
    <interactant intactId="EBI-11987425">
        <id>Q6L8G8</id>
    </interactant>
    <interactant intactId="EBI-10192698">
        <id>Q02930-3</id>
        <label>CREB5</label>
    </interactant>
    <organismsDiffer>false</organismsDiffer>
    <experiments>3</experiments>
</comment>
<comment type="interaction">
    <interactant intactId="EBI-11987425">
        <id>Q6L8G8</id>
    </interactant>
    <interactant intactId="EBI-2212355">
        <id>Q49AN0</id>
        <label>CRY2</label>
    </interactant>
    <organismsDiffer>false</organismsDiffer>
    <experiments>3</experiments>
</comment>
<comment type="interaction">
    <interactant intactId="EBI-11987425">
        <id>Q6L8G8</id>
    </interactant>
    <interactant intactId="EBI-3867333">
        <id>A8MQ03</id>
        <label>CYSRT1</label>
    </interactant>
    <organismsDiffer>false</organismsDiffer>
    <experiments>3</experiments>
</comment>
<comment type="interaction">
    <interactant intactId="EBI-11987425">
        <id>Q6L8G8</id>
    </interactant>
    <interactant intactId="EBI-9679045">
        <id>Q9NQL9</id>
        <label>DMRT3</label>
    </interactant>
    <organismsDiffer>false</organismsDiffer>
    <experiments>3</experiments>
</comment>
<comment type="interaction">
    <interactant intactId="EBI-11987425">
        <id>Q6L8G8</id>
    </interactant>
    <interactant intactId="EBI-448771">
        <id>Q92608</id>
        <label>DOCK2</label>
    </interactant>
    <organismsDiffer>false</organismsDiffer>
    <experiments>3</experiments>
</comment>
<comment type="interaction">
    <interactant intactId="EBI-11987425">
        <id>Q6L8G8</id>
    </interactant>
    <interactant intactId="EBI-719941">
        <id>Q3B820</id>
        <label>FAM161A</label>
    </interactant>
    <organismsDiffer>false</organismsDiffer>
    <experiments>3</experiments>
</comment>
<comment type="interaction">
    <interactant intactId="EBI-11987425">
        <id>Q6L8G8</id>
    </interactant>
    <interactant intactId="EBI-11978177">
        <id>Q96NT3-2</id>
        <label>GUCD1</label>
    </interactant>
    <organismsDiffer>false</organismsDiffer>
    <experiments>3</experiments>
</comment>
<comment type="interaction">
    <interactant intactId="EBI-11987425">
        <id>Q6L8G8</id>
    </interactant>
    <interactant intactId="EBI-747421">
        <id>Q03014</id>
        <label>HHEX</label>
    </interactant>
    <organismsDiffer>false</organismsDiffer>
    <experiments>3</experiments>
</comment>
<comment type="interaction">
    <interactant intactId="EBI-11987425">
        <id>Q6L8G8</id>
    </interactant>
    <interactant intactId="EBI-745290">
        <id>P17482</id>
        <label>HOXB9</label>
    </interactant>
    <organismsDiffer>false</organismsDiffer>
    <experiments>3</experiments>
</comment>
<comment type="interaction">
    <interactant intactId="EBI-11987425">
        <id>Q6L8G8</id>
    </interactant>
    <interactant intactId="EBI-947015">
        <id>P24592</id>
        <label>IGFBP6</label>
    </interactant>
    <organismsDiffer>false</organismsDiffer>
    <experiments>3</experiments>
</comment>
<comment type="interaction">
    <interactant intactId="EBI-11987425">
        <id>Q6L8G8</id>
    </interactant>
    <interactant intactId="EBI-8293590">
        <id>Q969P0</id>
        <label>IGSF8</label>
    </interactant>
    <organismsDiffer>false</organismsDiffer>
    <experiments>3</experiments>
</comment>
<comment type="interaction">
    <interactant intactId="EBI-11987425">
        <id>Q6L8G8</id>
    </interactant>
    <interactant intactId="EBI-80475">
        <id>P31785</id>
        <label>IL2RG</label>
    </interactant>
    <organismsDiffer>false</organismsDiffer>
    <experiments>3</experiments>
</comment>
<comment type="interaction">
    <interactant intactId="EBI-11987425">
        <id>Q6L8G8</id>
    </interactant>
    <interactant intactId="EBI-1223434">
        <id>P18084</id>
        <label>ITGB5</label>
    </interactant>
    <organismsDiffer>false</organismsDiffer>
    <experiments>3</experiments>
</comment>
<comment type="interaction">
    <interactant intactId="EBI-11987425">
        <id>Q6L8G8</id>
    </interactant>
    <interactant intactId="EBI-10981970">
        <id>Q5T749</id>
        <label>KPRP</label>
    </interactant>
    <organismsDiffer>false</organismsDiffer>
    <experiments>3</experiments>
</comment>
<comment type="interaction">
    <interactant intactId="EBI-11987425">
        <id>Q6L8G8</id>
    </interactant>
    <interactant intactId="EBI-11955579">
        <id>P60014</id>
        <label>KRTAP10-10</label>
    </interactant>
    <organismsDiffer>false</organismsDiffer>
    <experiments>3</experiments>
</comment>
<comment type="interaction">
    <interactant intactId="EBI-11987425">
        <id>Q6L8G8</id>
    </interactant>
    <interactant intactId="EBI-10172511">
        <id>Q9BYR5</id>
        <label>KRTAP4-2</label>
    </interactant>
    <organismsDiffer>false</organismsDiffer>
    <experiments>4</experiments>
</comment>
<comment type="interaction">
    <interactant intactId="EBI-11987425">
        <id>Q6L8G8</id>
    </interactant>
    <interactant intactId="EBI-11958132">
        <id>Q9BYR3</id>
        <label>KRTAP4-4</label>
    </interactant>
    <organismsDiffer>false</organismsDiffer>
    <experiments>3</experiments>
</comment>
<comment type="interaction">
    <interactant intactId="EBI-11987425">
        <id>Q6L8G8</id>
    </interactant>
    <interactant intactId="EBI-11993296">
        <id>Q6L8G4</id>
        <label>KRTAP5-11</label>
    </interactant>
    <organismsDiffer>false</organismsDiffer>
    <experiments>3</experiments>
</comment>
<comment type="interaction">
    <interactant intactId="EBI-11987425">
        <id>Q6L8G8</id>
    </interactant>
    <interactant intactId="EBI-11958178">
        <id>Q701N4</id>
        <label>KRTAP5-2</label>
    </interactant>
    <organismsDiffer>false</organismsDiffer>
    <experiments>3</experiments>
</comment>
<comment type="interaction">
    <interactant intactId="EBI-11987425">
        <id>Q6L8G8</id>
    </interactant>
    <interactant intactId="EBI-10250562">
        <id>Q6L8G9</id>
        <label>KRTAP5-6</label>
    </interactant>
    <organismsDiffer>false</organismsDiffer>
    <experiments>4</experiments>
</comment>
<comment type="interaction">
    <interactant intactId="EBI-11987425">
        <id>Q6L8G8</id>
    </interactant>
    <interactant intactId="EBI-1044640">
        <id>Q9BYQ4</id>
        <label>KRTAP9-2</label>
    </interactant>
    <organismsDiffer>false</organismsDiffer>
    <experiments>3</experiments>
</comment>
<comment type="interaction">
    <interactant intactId="EBI-11987425">
        <id>Q6L8G8</id>
    </interactant>
    <interactant intactId="EBI-11962058">
        <id>Q5T7P2</id>
        <label>LCE1A</label>
    </interactant>
    <organismsDiffer>false</organismsDiffer>
    <experiments>3</experiments>
</comment>
<comment type="interaction">
    <interactant intactId="EBI-11987425">
        <id>Q6L8G8</id>
    </interactant>
    <interactant intactId="EBI-10245913">
        <id>Q5T7P3</id>
        <label>LCE1B</label>
    </interactant>
    <organismsDiffer>false</organismsDiffer>
    <experiments>3</experiments>
</comment>
<comment type="interaction">
    <interactant intactId="EBI-11987425">
        <id>Q6L8G8</id>
    </interactant>
    <interactant intactId="EBI-11955335">
        <id>Q5T753</id>
        <label>LCE1E</label>
    </interactant>
    <organismsDiffer>false</organismsDiffer>
    <experiments>3</experiments>
</comment>
<comment type="interaction">
    <interactant intactId="EBI-11987425">
        <id>Q6L8G8</id>
    </interactant>
    <interactant intactId="EBI-11478468">
        <id>O14633</id>
        <label>LCE2B</label>
    </interactant>
    <organismsDiffer>false</organismsDiffer>
    <experiments>3</experiments>
</comment>
<comment type="interaction">
    <interactant intactId="EBI-11987425">
        <id>Q6L8G8</id>
    </interactant>
    <interactant intactId="EBI-11973993">
        <id>Q5TA81</id>
        <label>LCE2C</label>
    </interactant>
    <organismsDiffer>false</organismsDiffer>
    <experiments>3</experiments>
</comment>
<comment type="interaction">
    <interactant intactId="EBI-11987425">
        <id>Q6L8G8</id>
    </interactant>
    <interactant intactId="EBI-10246750">
        <id>Q5TA82</id>
        <label>LCE2D</label>
    </interactant>
    <organismsDiffer>false</organismsDiffer>
    <experiments>3</experiments>
</comment>
<comment type="interaction">
    <interactant intactId="EBI-11987425">
        <id>Q6L8G8</id>
    </interactant>
    <interactant intactId="EBI-9394625">
        <id>Q5TA76</id>
        <label>LCE3A</label>
    </interactant>
    <organismsDiffer>false</organismsDiffer>
    <experiments>3</experiments>
</comment>
<comment type="interaction">
    <interactant intactId="EBI-11987425">
        <id>Q6L8G8</id>
    </interactant>
    <interactant intactId="EBI-11974495">
        <id>Q5TA77</id>
        <label>LCE3B</label>
    </interactant>
    <organismsDiffer>false</organismsDiffer>
    <experiments>3</experiments>
</comment>
<comment type="interaction">
    <interactant intactId="EBI-11987425">
        <id>Q6L8G8</id>
    </interactant>
    <interactant intactId="EBI-6658837">
        <id>Q9BYE3</id>
        <label>LCE3D</label>
    </interactant>
    <organismsDiffer>false</organismsDiffer>
    <experiments>3</experiments>
</comment>
<comment type="interaction">
    <interactant intactId="EBI-11987425">
        <id>Q6L8G8</id>
    </interactant>
    <interactant intactId="EBI-10245456">
        <id>Q5T5B0</id>
        <label>LCE3E</label>
    </interactant>
    <organismsDiffer>false</organismsDiffer>
    <experiments>3</experiments>
</comment>
<comment type="interaction">
    <interactant intactId="EBI-11987425">
        <id>Q6L8G8</id>
    </interactant>
    <interactant intactId="EBI-10246358">
        <id>Q5TA78</id>
        <label>LCE4A</label>
    </interactant>
    <organismsDiffer>false</organismsDiffer>
    <experiments>3</experiments>
</comment>
<comment type="interaction">
    <interactant intactId="EBI-11987425">
        <id>Q6L8G8</id>
    </interactant>
    <interactant intactId="EBI-2683507">
        <id>Q8N5G2</id>
        <label>MACO1</label>
    </interactant>
    <organismsDiffer>false</organismsDiffer>
    <experiments>3</experiments>
</comment>
<comment type="interaction">
    <interactant intactId="EBI-11987425">
        <id>Q6L8G8</id>
    </interactant>
    <interactant intactId="EBI-947402">
        <id>O60336</id>
        <label>MAPKBP1</label>
    </interactant>
    <organismsDiffer>false</organismsDiffer>
    <experiments>3</experiments>
</comment>
<comment type="interaction">
    <interactant intactId="EBI-11987425">
        <id>Q6L8G8</id>
    </interactant>
    <interactant intactId="EBI-399076">
        <id>Q9NV56</id>
        <label>MRGBP</label>
    </interactant>
    <organismsDiffer>false</organismsDiffer>
    <experiments>3</experiments>
</comment>
<comment type="interaction">
    <interactant intactId="EBI-11987425">
        <id>Q6L8G8</id>
    </interactant>
    <interactant intactId="EBI-10211940">
        <id>P50539-3</id>
        <label>MXI1</label>
    </interactant>
    <organismsDiffer>false</organismsDiffer>
    <experiments>3</experiments>
</comment>
<comment type="interaction">
    <interactant intactId="EBI-11987425">
        <id>Q6L8G8</id>
    </interactant>
    <interactant intactId="EBI-12010196">
        <id>P52179-2</id>
        <label>MYOM1</label>
    </interactant>
    <organismsDiffer>false</organismsDiffer>
    <experiments>3</experiments>
</comment>
<comment type="interaction">
    <interactant intactId="EBI-11987425">
        <id>Q6L8G8</id>
    </interactant>
    <interactant intactId="EBI-14084211">
        <id>A2BDE7</id>
        <label>PHLDA1</label>
    </interactant>
    <organismsDiffer>false</organismsDiffer>
    <experiments>3</experiments>
</comment>
<comment type="interaction">
    <interactant intactId="EBI-11987425">
        <id>Q6L8G8</id>
    </interactant>
    <interactant intactId="EBI-7199479">
        <id>Q8WUK0</id>
        <label>PTPMT1</label>
    </interactant>
    <organismsDiffer>false</organismsDiffer>
    <experiments>3</experiments>
</comment>
<comment type="interaction">
    <interactant intactId="EBI-11987425">
        <id>Q6L8G8</id>
    </interactant>
    <interactant intactId="EBI-720447">
        <id>O60896</id>
        <label>RAMP3</label>
    </interactant>
    <organismsDiffer>false</organismsDiffer>
    <experiments>3</experiments>
</comment>
<comment type="interaction">
    <interactant intactId="EBI-11987425">
        <id>Q6L8G8</id>
    </interactant>
    <interactant intactId="EBI-14067109">
        <id>Q96NU1</id>
        <label>SAMD11</label>
    </interactant>
    <organismsDiffer>false</organismsDiffer>
    <experiments>3</experiments>
</comment>
<comment type="interaction">
    <interactant intactId="EBI-11987425">
        <id>Q6L8G8</id>
    </interactant>
    <interactant intactId="EBI-12056025">
        <id>Q14162</id>
        <label>SCARF1</label>
    </interactant>
    <organismsDiffer>false</organismsDiffer>
    <experiments>3</experiments>
</comment>
<comment type="interaction">
    <interactant intactId="EBI-11987425">
        <id>Q6L8G8</id>
    </interactant>
    <interactant intactId="EBI-10204280">
        <id>A0A0S2Z4U3</id>
        <label>SDC3</label>
    </interactant>
    <organismsDiffer>false</organismsDiffer>
    <experiments>3</experiments>
</comment>
<comment type="interaction">
    <interactant intactId="EBI-11987425">
        <id>Q6L8G8</id>
    </interactant>
    <interactant intactId="EBI-11955083">
        <id>Q9NUL5-4</id>
        <label>SHFL</label>
    </interactant>
    <organismsDiffer>false</organismsDiffer>
    <experiments>3</experiments>
</comment>
<comment type="interaction">
    <interactant intactId="EBI-11987425">
        <id>Q6L8G8</id>
    </interactant>
    <interactant intactId="EBI-1051105">
        <id>Q92504</id>
        <label>SLC39A7</label>
    </interactant>
    <organismsDiffer>false</organismsDiffer>
    <experiments>3</experiments>
</comment>
<comment type="interaction">
    <interactant intactId="EBI-11987425">
        <id>Q6L8G8</id>
    </interactant>
    <interactant intactId="EBI-5235829">
        <id>Q8IWZ5</id>
        <label>TRIM42</label>
    </interactant>
    <organismsDiffer>false</organismsDiffer>
    <experiments>3</experiments>
</comment>
<comment type="interaction">
    <interactant intactId="EBI-11987425">
        <id>Q6L8G8</id>
    </interactant>
    <interactant intactId="EBI-357355">
        <id>Q9UBK9</id>
        <label>UXT</label>
    </interactant>
    <organismsDiffer>false</organismsDiffer>
    <experiments>3</experiments>
</comment>
<comment type="interaction">
    <interactant intactId="EBI-11987425">
        <id>Q6L8G8</id>
    </interactant>
    <interactant intactId="EBI-8058160">
        <id>O96014</id>
        <label>WNT11</label>
    </interactant>
    <organismsDiffer>false</organismsDiffer>
    <experiments>3</experiments>
</comment>
<comment type="interaction">
    <interactant intactId="EBI-11987425">
        <id>Q6L8G8</id>
    </interactant>
    <interactant intactId="EBI-373456">
        <id>Q9Y3S2</id>
        <label>ZNF330</label>
    </interactant>
    <organismsDiffer>false</organismsDiffer>
    <experiments>3</experiments>
</comment>
<comment type="interaction">
    <interactant intactId="EBI-11987425">
        <id>Q6L8G8</id>
    </interactant>
    <interactant intactId="EBI-726439">
        <id>Q8IYI8</id>
        <label>ZNF440</label>
    </interactant>
    <organismsDiffer>false</organismsDiffer>
    <experiments>3</experiments>
</comment>
<comment type="interaction">
    <interactant intactId="EBI-11987425">
        <id>Q6L8G8</id>
    </interactant>
    <interactant intactId="EBI-10820574">
        <id>Q96JC4</id>
        <label>ZNF479</label>
    </interactant>
    <organismsDiffer>false</organismsDiffer>
    <experiments>3</experiments>
</comment>
<comment type="interaction">
    <interactant intactId="EBI-11987425">
        <id>Q6L8G8</id>
    </interactant>
    <interactant intactId="EBI-6427977">
        <id>Q96SQ5</id>
        <label>ZNF587</label>
    </interactant>
    <organismsDiffer>false</organismsDiffer>
    <experiments>3</experiments>
</comment>
<comment type="interaction">
    <interactant intactId="EBI-11987425">
        <id>Q6L8G8</id>
    </interactant>
    <interactant intactId="EBI-12062855">
        <id>Q6PF04</id>
        <label>ZNF613</label>
    </interactant>
    <organismsDiffer>false</organismsDiffer>
    <experiments>3</experiments>
</comment>
<comment type="tissue specificity">
    <text evidence="1">Expressed in hair root but not in skin.</text>
</comment>
<comment type="similarity">
    <text evidence="2">Belongs to the KRTAP type 5 family.</text>
</comment>
<reference key="1">
    <citation type="journal article" date="2004" name="Biochem. Biophys. Res. Commun.">
        <title>Identification of two novel clusters of ultrahigh-sulfur keratin-associated protein genes on human chromosome 11.</title>
        <authorList>
            <person name="Yahagi S."/>
            <person name="Shibuya K."/>
            <person name="Obayashi I."/>
            <person name="Masaki H."/>
            <person name="Kurata Y."/>
            <person name="Kudoh J."/>
            <person name="Shimizu N."/>
        </authorList>
    </citation>
    <scope>NUCLEOTIDE SEQUENCE [MRNA]</scope>
    <scope>TISSUE SPECIFICITY</scope>
    <source>
        <tissue>Hair root</tissue>
    </source>
</reference>
<reference key="2">
    <citation type="journal article" date="2004" name="Genome Res.">
        <title>The status, quality, and expansion of the NIH full-length cDNA project: the Mammalian Gene Collection (MGC).</title>
        <authorList>
            <consortium name="The MGC Project Team"/>
        </authorList>
    </citation>
    <scope>NUCLEOTIDE SEQUENCE [LARGE SCALE MRNA]</scope>
</reference>
<reference key="3">
    <citation type="submission" date="2004-02" db="EMBL/GenBank/DDBJ databases">
        <title>Characterization of two domains of keratin associated protein (KAP) family members on human chromosome 11.</title>
        <authorList>
            <person name="Rogers M.A."/>
            <person name="Langbein L."/>
            <person name="Winter H."/>
            <person name="Praetzel S."/>
            <person name="Schweizer J."/>
        </authorList>
    </citation>
    <scope>NUCLEOTIDE SEQUENCE [MRNA] OF 128-165</scope>
    <source>
        <tissue>Scalp</tissue>
    </source>
</reference>
<proteinExistence type="evidence at protein level"/>
<evidence type="ECO:0000269" key="1">
    <source>
    </source>
</evidence>
<evidence type="ECO:0000305" key="2"/>
<dbReference type="EMBL" id="AB126076">
    <property type="protein sequence ID" value="BAD20203.1"/>
    <property type="molecule type" value="mRNA"/>
</dbReference>
<dbReference type="EMBL" id="BC136967">
    <property type="protein sequence ID" value="AAI36968.1"/>
    <property type="molecule type" value="mRNA"/>
</dbReference>
<dbReference type="EMBL" id="BC136968">
    <property type="protein sequence ID" value="AAI36969.1"/>
    <property type="molecule type" value="mRNA"/>
</dbReference>
<dbReference type="EMBL" id="AJ628243">
    <property type="protein sequence ID" value="CAF31636.1"/>
    <property type="molecule type" value="mRNA"/>
</dbReference>
<dbReference type="CCDS" id="CCDS41682.1"/>
<dbReference type="RefSeq" id="NP_001012521.1">
    <property type="nucleotide sequence ID" value="NM_001012503.2"/>
</dbReference>
<dbReference type="BioGRID" id="136247">
    <property type="interactions" value="70"/>
</dbReference>
<dbReference type="FunCoup" id="Q6L8G8">
    <property type="interactions" value="73"/>
</dbReference>
<dbReference type="IntAct" id="Q6L8G8">
    <property type="interactions" value="59"/>
</dbReference>
<dbReference type="STRING" id="9606.ENSP00000417330"/>
<dbReference type="iPTMnet" id="Q6L8G8"/>
<dbReference type="PhosphoSitePlus" id="Q6L8G8"/>
<dbReference type="BioMuta" id="KRTAP5-7"/>
<dbReference type="PaxDb" id="9606-ENSP00000417330"/>
<dbReference type="PeptideAtlas" id="Q6L8G8"/>
<dbReference type="DNASU" id="440050"/>
<dbReference type="Ensembl" id="ENST00000398536.6">
    <property type="protein sequence ID" value="ENSP00000417330.2"/>
    <property type="gene ID" value="ENSG00000244411.4"/>
</dbReference>
<dbReference type="GeneID" id="440050"/>
<dbReference type="KEGG" id="hsa:440050"/>
<dbReference type="MANE-Select" id="ENST00000398536.6">
    <property type="protein sequence ID" value="ENSP00000417330.2"/>
    <property type="RefSeq nucleotide sequence ID" value="NM_001012503.2"/>
    <property type="RefSeq protein sequence ID" value="NP_001012521.1"/>
</dbReference>
<dbReference type="UCSC" id="uc001oqq.2">
    <property type="organism name" value="human"/>
</dbReference>
<dbReference type="AGR" id="HGNC:23602"/>
<dbReference type="CTD" id="440050"/>
<dbReference type="DisGeNET" id="440050"/>
<dbReference type="GeneCards" id="KRTAP5-7"/>
<dbReference type="HGNC" id="HGNC:23602">
    <property type="gene designation" value="KRTAP5-7"/>
</dbReference>
<dbReference type="HPA" id="ENSG00000244411">
    <property type="expression patterns" value="Tissue enhanced (skin, testis)"/>
</dbReference>
<dbReference type="neXtProt" id="NX_Q6L8G8"/>
<dbReference type="OpenTargets" id="ENSG00000244411"/>
<dbReference type="PharmGKB" id="PA134880610"/>
<dbReference type="VEuPathDB" id="HostDB:ENSG00000244411"/>
<dbReference type="eggNOG" id="ENOG502TEPC">
    <property type="taxonomic scope" value="Eukaryota"/>
</dbReference>
<dbReference type="GeneTree" id="ENSGT00990000205266"/>
<dbReference type="HOGENOM" id="CLU_097966_1_0_1"/>
<dbReference type="InParanoid" id="Q6L8G8"/>
<dbReference type="OMA" id="CKPCCES"/>
<dbReference type="PAN-GO" id="Q6L8G8">
    <property type="GO annotations" value="0 GO annotations based on evolutionary models"/>
</dbReference>
<dbReference type="PathwayCommons" id="Q6L8G8"/>
<dbReference type="Reactome" id="R-HSA-6805567">
    <property type="pathway name" value="Keratinization"/>
</dbReference>
<dbReference type="SignaLink" id="Q6L8G8"/>
<dbReference type="BioGRID-ORCS" id="440050">
    <property type="hits" value="386 hits in 1042 CRISPR screens"/>
</dbReference>
<dbReference type="GenomeRNAi" id="440050"/>
<dbReference type="Pharos" id="Q6L8G8">
    <property type="development level" value="Tdark"/>
</dbReference>
<dbReference type="PRO" id="PR:Q6L8G8"/>
<dbReference type="Proteomes" id="UP000005640">
    <property type="component" value="Chromosome 11"/>
</dbReference>
<dbReference type="RNAct" id="Q6L8G8">
    <property type="molecule type" value="protein"/>
</dbReference>
<dbReference type="Bgee" id="ENSG00000244411">
    <property type="expression patterns" value="Expressed in substantia nigra and 38 other cell types or tissues"/>
</dbReference>
<dbReference type="GO" id="GO:0005829">
    <property type="term" value="C:cytosol"/>
    <property type="evidence" value="ECO:0000304"/>
    <property type="project" value="Reactome"/>
</dbReference>
<dbReference type="GO" id="GO:0005882">
    <property type="term" value="C:intermediate filament"/>
    <property type="evidence" value="ECO:0007669"/>
    <property type="project" value="UniProtKB-KW"/>
</dbReference>